<evidence type="ECO:0000255" key="1">
    <source>
        <dbReference type="PROSITE-ProRule" id="PRU00159"/>
    </source>
</evidence>
<evidence type="ECO:0000255" key="2">
    <source>
        <dbReference type="PROSITE-ProRule" id="PRU10027"/>
    </source>
</evidence>
<evidence type="ECO:0000269" key="3">
    <source>
    </source>
</evidence>
<evidence type="ECO:0000269" key="4">
    <source>
    </source>
</evidence>
<evidence type="ECO:0000269" key="5">
    <source>
    </source>
</evidence>
<evidence type="ECO:0000269" key="6">
    <source>
    </source>
</evidence>
<keyword id="KW-0067">ATP-binding</keyword>
<keyword id="KW-0418">Kinase</keyword>
<keyword id="KW-0547">Nucleotide-binding</keyword>
<keyword id="KW-1185">Reference proteome</keyword>
<keyword id="KW-0723">Serine/threonine-protein kinase</keyword>
<keyword id="KW-0808">Transferase</keyword>
<name>KDX1_YEAST</name>
<accession>P36005</accession>
<accession>D6VX38</accession>
<sequence>MATDTERCIFRAFGQDFILNKHFHLTGKIGRGSHSLICSSTYTESNEETHVAIRKIPNAFGNKLSCKRTLRELKLLRHLRGHPNIVWLFDTDIVFYPNGALNGVYLYEELMECDLSQIIRSEQRLEDAHFQSFIYQILCALKYIHSANVLHCDLKPKNLLVNSDCQLKICNFGLSCSYSENHKVNDGFIKGYITSIWYKAPEILLNYQECTKAVDIWSTGCILAELLGRKPMFEGKDYVDHLNHILQILGTPPEETLQEIASQKVYNYIFQFGNIPGRSFESILPGANPEALELLKKMLEFDPKKRITVEDALEHPYLSMWHDIDEEFSCQKTFRFEFEHIESMAELGNEVIKEVFDFRKVVRKHPISGDSPSSSLSLEDAIPQEVVQVHPSRKVLPSYSPEFSYVSQLPSLTTTQPYQNLMGISSNSFQGVN</sequence>
<feature type="chain" id="PRO_0000086150" description="Serine/threonine-protein kinase KDX1">
    <location>
        <begin position="1"/>
        <end position="433"/>
    </location>
</feature>
<feature type="domain" description="Protein kinase" evidence="1">
    <location>
        <begin position="23"/>
        <end position="318"/>
    </location>
</feature>
<feature type="active site" description="Proton acceptor" evidence="1 2">
    <location>
        <position position="153"/>
    </location>
</feature>
<feature type="binding site" evidence="1">
    <location>
        <begin position="29"/>
        <end position="37"/>
    </location>
    <ligand>
        <name>ATP</name>
        <dbReference type="ChEBI" id="CHEBI:30616"/>
    </ligand>
</feature>
<feature type="binding site" evidence="1">
    <location>
        <position position="55"/>
    </location>
    <ligand>
        <name>ATP</name>
        <dbReference type="ChEBI" id="CHEBI:30616"/>
    </ligand>
</feature>
<protein>
    <recommendedName>
        <fullName>Serine/threonine-protein kinase KDX1</fullName>
        <ecNumber>2.7.11.1</ecNumber>
    </recommendedName>
    <alternativeName>
        <fullName>Kinase dead X-talker protein 1</fullName>
    </alternativeName>
    <alternativeName>
        <fullName>MPK1-like protein kinase 1</fullName>
    </alternativeName>
</protein>
<proteinExistence type="evidence at protein level"/>
<comment type="function">
    <text evidence="3 5 6">Serine/threonine-protein kinase involved in the SLT2 mitogen-activated (MAP) kinase signaling pathway that regulates cell wall integrity. May also be involved in the mating pheromone and the CWI MAPK pathways.</text>
</comment>
<comment type="catalytic activity">
    <reaction>
        <text>L-seryl-[protein] + ATP = O-phospho-L-seryl-[protein] + ADP + H(+)</text>
        <dbReference type="Rhea" id="RHEA:17989"/>
        <dbReference type="Rhea" id="RHEA-COMP:9863"/>
        <dbReference type="Rhea" id="RHEA-COMP:11604"/>
        <dbReference type="ChEBI" id="CHEBI:15378"/>
        <dbReference type="ChEBI" id="CHEBI:29999"/>
        <dbReference type="ChEBI" id="CHEBI:30616"/>
        <dbReference type="ChEBI" id="CHEBI:83421"/>
        <dbReference type="ChEBI" id="CHEBI:456216"/>
        <dbReference type="EC" id="2.7.11.1"/>
    </reaction>
</comment>
<comment type="catalytic activity">
    <reaction>
        <text>L-threonyl-[protein] + ATP = O-phospho-L-threonyl-[protein] + ADP + H(+)</text>
        <dbReference type="Rhea" id="RHEA:46608"/>
        <dbReference type="Rhea" id="RHEA-COMP:11060"/>
        <dbReference type="Rhea" id="RHEA-COMP:11605"/>
        <dbReference type="ChEBI" id="CHEBI:15378"/>
        <dbReference type="ChEBI" id="CHEBI:30013"/>
        <dbReference type="ChEBI" id="CHEBI:30616"/>
        <dbReference type="ChEBI" id="CHEBI:61977"/>
        <dbReference type="ChEBI" id="CHEBI:456216"/>
        <dbReference type="EC" id="2.7.11.1"/>
    </reaction>
</comment>
<comment type="subunit">
    <text evidence="6">Interacts with RLM1.</text>
</comment>
<comment type="induction">
    <text evidence="4">Accumulates in large amounts when cell wall integrity is compromised.</text>
</comment>
<comment type="similarity">
    <text evidence="1">Belongs to the protein kinase superfamily. Ser/Thr protein kinase family.</text>
</comment>
<reference key="1">
    <citation type="journal article" date="1994" name="Yeast">
        <title>DNA sequencing of a 36.2 kb fragment located between the FAS1 and LAP loci of chromosome XI of Saccharomyces cerevisiae.</title>
        <authorList>
            <person name="Vandenbol M."/>
            <person name="Bolle P.-A."/>
            <person name="Dion C."/>
            <person name="Portetelle D."/>
            <person name="Hilger F."/>
        </authorList>
    </citation>
    <scope>NUCLEOTIDE SEQUENCE [GENOMIC DNA]</scope>
    <source>
        <strain>ATCC 204508 / S288c</strain>
    </source>
</reference>
<reference key="2">
    <citation type="journal article" date="1994" name="Nature">
        <title>Complete DNA sequence of yeast chromosome XI.</title>
        <authorList>
            <person name="Dujon B."/>
            <person name="Alexandraki D."/>
            <person name="Andre B."/>
            <person name="Ansorge W."/>
            <person name="Baladron V."/>
            <person name="Ballesta J.P.G."/>
            <person name="Banrevi A."/>
            <person name="Bolle P.-A."/>
            <person name="Bolotin-Fukuhara M."/>
            <person name="Bossier P."/>
            <person name="Bou G."/>
            <person name="Boyer J."/>
            <person name="Buitrago M.J."/>
            <person name="Cheret G."/>
            <person name="Colleaux L."/>
            <person name="Daignan-Fornier B."/>
            <person name="del Rey F."/>
            <person name="Dion C."/>
            <person name="Domdey H."/>
            <person name="Duesterhoeft A."/>
            <person name="Duesterhus S."/>
            <person name="Entian K.-D."/>
            <person name="Erfle H."/>
            <person name="Esteban P.F."/>
            <person name="Feldmann H."/>
            <person name="Fernandes L."/>
            <person name="Fobo G.M."/>
            <person name="Fritz C."/>
            <person name="Fukuhara H."/>
            <person name="Gabel C."/>
            <person name="Gaillon L."/>
            <person name="Garcia-Cantalejo J.M."/>
            <person name="Garcia-Ramirez J.J."/>
            <person name="Gent M.E."/>
            <person name="Ghazvini M."/>
            <person name="Goffeau A."/>
            <person name="Gonzalez A."/>
            <person name="Grothues D."/>
            <person name="Guerreiro P."/>
            <person name="Hegemann J.H."/>
            <person name="Hewitt N."/>
            <person name="Hilger F."/>
            <person name="Hollenberg C.P."/>
            <person name="Horaitis O."/>
            <person name="Indge K.J."/>
            <person name="Jacquier A."/>
            <person name="James C.M."/>
            <person name="Jauniaux J.-C."/>
            <person name="Jimenez A."/>
            <person name="Keuchel H."/>
            <person name="Kirchrath L."/>
            <person name="Kleine K."/>
            <person name="Koetter P."/>
            <person name="Legrain P."/>
            <person name="Liebl S."/>
            <person name="Louis E.J."/>
            <person name="Maia e Silva A."/>
            <person name="Marck C."/>
            <person name="Monnier A.-L."/>
            <person name="Moestl D."/>
            <person name="Mueller S."/>
            <person name="Obermaier B."/>
            <person name="Oliver S.G."/>
            <person name="Pallier C."/>
            <person name="Pascolo S."/>
            <person name="Pfeiffer F."/>
            <person name="Philippsen P."/>
            <person name="Planta R.J."/>
            <person name="Pohl F.M."/>
            <person name="Pohl T.M."/>
            <person name="Poehlmann R."/>
            <person name="Portetelle D."/>
            <person name="Purnelle B."/>
            <person name="Puzos V."/>
            <person name="Ramezani Rad M."/>
            <person name="Rasmussen S.W."/>
            <person name="Remacha M.A."/>
            <person name="Revuelta J.L."/>
            <person name="Richard G.-F."/>
            <person name="Rieger M."/>
            <person name="Rodrigues-Pousada C."/>
            <person name="Rose M."/>
            <person name="Rupp T."/>
            <person name="Santos M.A."/>
            <person name="Schwager C."/>
            <person name="Sensen C."/>
            <person name="Skala J."/>
            <person name="Soares H."/>
            <person name="Sor F."/>
            <person name="Stegemann J."/>
            <person name="Tettelin H."/>
            <person name="Thierry A."/>
            <person name="Tzermia M."/>
            <person name="Urrestarazu L.A."/>
            <person name="van Dyck L."/>
            <person name="van Vliet-Reedijk J.C."/>
            <person name="Valens M."/>
            <person name="Vandenbol M."/>
            <person name="Vilela C."/>
            <person name="Vissers S."/>
            <person name="von Wettstein D."/>
            <person name="Voss H."/>
            <person name="Wiemann S."/>
            <person name="Xu G."/>
            <person name="Zimmermann J."/>
            <person name="Haasemann M."/>
            <person name="Becker I."/>
            <person name="Mewes H.-W."/>
        </authorList>
    </citation>
    <scope>NUCLEOTIDE SEQUENCE [LARGE SCALE GENOMIC DNA]</scope>
    <source>
        <strain>ATCC 204508 / S288c</strain>
    </source>
</reference>
<reference key="3">
    <citation type="journal article" date="2014" name="G3 (Bethesda)">
        <title>The reference genome sequence of Saccharomyces cerevisiae: Then and now.</title>
        <authorList>
            <person name="Engel S.R."/>
            <person name="Dietrich F.S."/>
            <person name="Fisk D.G."/>
            <person name="Binkley G."/>
            <person name="Balakrishnan R."/>
            <person name="Costanzo M.C."/>
            <person name="Dwight S.S."/>
            <person name="Hitz B.C."/>
            <person name="Karra K."/>
            <person name="Nash R.S."/>
            <person name="Weng S."/>
            <person name="Wong E.D."/>
            <person name="Lloyd P."/>
            <person name="Skrzypek M.S."/>
            <person name="Miyasato S.R."/>
            <person name="Simison M."/>
            <person name="Cherry J.M."/>
        </authorList>
    </citation>
    <scope>GENOME REANNOTATION</scope>
    <source>
        <strain>ATCC 204508 / S288c</strain>
    </source>
</reference>
<reference key="4">
    <citation type="journal article" date="1997" name="Mol. Cell. Biol.">
        <title>Characterization of a serum response factor-like protein in Saccharomyces cerevisiae, Rlm1, which has transcriptional activity regulated by the Mpk1 (Slt2) mitogen-activated protein kinase pathway.</title>
        <authorList>
            <person name="Watanabe Y."/>
            <person name="Takaesu G."/>
            <person name="Hagiwara M."/>
            <person name="Irie K."/>
            <person name="Matsumoto K."/>
        </authorList>
    </citation>
    <scope>FUNCTION</scope>
    <scope>INTERACTION WITH RLM1</scope>
</reference>
<reference key="5">
    <citation type="journal article" date="2000" name="Nat. Genet.">
        <title>Analysis of yeast protein kinases using protein chips.</title>
        <authorList>
            <person name="Zhu H."/>
            <person name="Klemic J.F."/>
            <person name="Chang S."/>
            <person name="Bertone P."/>
            <person name="Casamayor A."/>
            <person name="Klemic K.G."/>
            <person name="Smith D."/>
            <person name="Gerstein M."/>
            <person name="Reed M.A."/>
            <person name="Snyder M."/>
        </authorList>
    </citation>
    <scope>FUNCTION</scope>
</reference>
<reference key="6">
    <citation type="journal article" date="2008" name="J. Biotechnol.">
        <title>A yeast strain biosensor to detect cell wall-perturbing agents.</title>
        <authorList>
            <person name="Rodriguez-Pena J.M."/>
            <person name="Diez-Muniz S."/>
            <person name="Nombela C."/>
            <person name="Arroyo J."/>
        </authorList>
    </citation>
    <scope>INDUCTION</scope>
</reference>
<reference key="7">
    <citation type="journal article" date="2010" name="Science">
        <title>A global protein kinase and phosphatase interaction network in yeast.</title>
        <authorList>
            <person name="Breitkreutz A."/>
            <person name="Choi H."/>
            <person name="Sharom J.R."/>
            <person name="Boucher L."/>
            <person name="Neduva V."/>
            <person name="Larsen B."/>
            <person name="Lin Z.Y."/>
            <person name="Breitkreutz B.J."/>
            <person name="Stark C."/>
            <person name="Liu G."/>
            <person name="Ahn J."/>
            <person name="Dewar-Darch D."/>
            <person name="Reguly T."/>
            <person name="Tang X."/>
            <person name="Almeida R."/>
            <person name="Qin Z.S."/>
            <person name="Pawson T."/>
            <person name="Gingras A.C."/>
            <person name="Nesvizhskii A.I."/>
            <person name="Tyers M."/>
        </authorList>
    </citation>
    <scope>FUNCTION</scope>
</reference>
<organism>
    <name type="scientific">Saccharomyces cerevisiae (strain ATCC 204508 / S288c)</name>
    <name type="common">Baker's yeast</name>
    <dbReference type="NCBI Taxonomy" id="559292"/>
    <lineage>
        <taxon>Eukaryota</taxon>
        <taxon>Fungi</taxon>
        <taxon>Dikarya</taxon>
        <taxon>Ascomycota</taxon>
        <taxon>Saccharomycotina</taxon>
        <taxon>Saccharomycetes</taxon>
        <taxon>Saccharomycetales</taxon>
        <taxon>Saccharomycetaceae</taxon>
        <taxon>Saccharomyces</taxon>
    </lineage>
</organism>
<dbReference type="EC" id="2.7.11.1"/>
<dbReference type="EMBL" id="Z26877">
    <property type="protein sequence ID" value="CAA81493.1"/>
    <property type="molecule type" value="Genomic_DNA"/>
</dbReference>
<dbReference type="EMBL" id="Z28161">
    <property type="protein sequence ID" value="CAA82003.1"/>
    <property type="molecule type" value="Genomic_DNA"/>
</dbReference>
<dbReference type="EMBL" id="BK006944">
    <property type="protein sequence ID" value="DAA09004.1"/>
    <property type="molecule type" value="Genomic_DNA"/>
</dbReference>
<dbReference type="PIR" id="S37790">
    <property type="entry name" value="S37790"/>
</dbReference>
<dbReference type="RefSeq" id="NP_012761.1">
    <property type="nucleotide sequence ID" value="NM_001179727.1"/>
</dbReference>
<dbReference type="SMR" id="P36005"/>
<dbReference type="BioGRID" id="33977">
    <property type="interactions" value="105"/>
</dbReference>
<dbReference type="DIP" id="DIP-6316N"/>
<dbReference type="FunCoup" id="P36005">
    <property type="interactions" value="416"/>
</dbReference>
<dbReference type="IntAct" id="P36005">
    <property type="interactions" value="26"/>
</dbReference>
<dbReference type="MINT" id="P36005"/>
<dbReference type="STRING" id="4932.YKL161C"/>
<dbReference type="iPTMnet" id="P36005"/>
<dbReference type="PaxDb" id="4932-YKL161C"/>
<dbReference type="PeptideAtlas" id="P36005"/>
<dbReference type="EnsemblFungi" id="YKL161C_mRNA">
    <property type="protein sequence ID" value="YKL161C"/>
    <property type="gene ID" value="YKL161C"/>
</dbReference>
<dbReference type="GeneID" id="853696"/>
<dbReference type="KEGG" id="sce:YKL161C"/>
<dbReference type="AGR" id="SGD:S000001644"/>
<dbReference type="SGD" id="S000001644">
    <property type="gene designation" value="KDX1"/>
</dbReference>
<dbReference type="VEuPathDB" id="FungiDB:YKL161C"/>
<dbReference type="eggNOG" id="KOG0660">
    <property type="taxonomic scope" value="Eukaryota"/>
</dbReference>
<dbReference type="GeneTree" id="ENSGT00940000176702"/>
<dbReference type="HOGENOM" id="CLU_000288_181_1_1"/>
<dbReference type="InParanoid" id="P36005"/>
<dbReference type="OMA" id="MWHDIDE"/>
<dbReference type="OrthoDB" id="192887at2759"/>
<dbReference type="BioCyc" id="YEAST:G3O-31929-MONOMER"/>
<dbReference type="BioGRID-ORCS" id="853696">
    <property type="hits" value="0 hits in 13 CRISPR screens"/>
</dbReference>
<dbReference type="PRO" id="PR:P36005"/>
<dbReference type="Proteomes" id="UP000002311">
    <property type="component" value="Chromosome XI"/>
</dbReference>
<dbReference type="RNAct" id="P36005">
    <property type="molecule type" value="protein"/>
</dbReference>
<dbReference type="GO" id="GO:0000307">
    <property type="term" value="C:cyclin-dependent protein kinase holoenzyme complex"/>
    <property type="evidence" value="ECO:0000318"/>
    <property type="project" value="GO_Central"/>
</dbReference>
<dbReference type="GO" id="GO:0005737">
    <property type="term" value="C:cytoplasm"/>
    <property type="evidence" value="ECO:0000318"/>
    <property type="project" value="GO_Central"/>
</dbReference>
<dbReference type="GO" id="GO:0005634">
    <property type="term" value="C:nucleus"/>
    <property type="evidence" value="ECO:0000318"/>
    <property type="project" value="GO_Central"/>
</dbReference>
<dbReference type="GO" id="GO:0005524">
    <property type="term" value="F:ATP binding"/>
    <property type="evidence" value="ECO:0007669"/>
    <property type="project" value="UniProtKB-KW"/>
</dbReference>
<dbReference type="GO" id="GO:0030332">
    <property type="term" value="F:cyclin binding"/>
    <property type="evidence" value="ECO:0000318"/>
    <property type="project" value="GO_Central"/>
</dbReference>
<dbReference type="GO" id="GO:0004693">
    <property type="term" value="F:cyclin-dependent protein serine/threonine kinase activity"/>
    <property type="evidence" value="ECO:0000318"/>
    <property type="project" value="GO_Central"/>
</dbReference>
<dbReference type="GO" id="GO:0106310">
    <property type="term" value="F:protein serine kinase activity"/>
    <property type="evidence" value="ECO:0007669"/>
    <property type="project" value="RHEA"/>
</dbReference>
<dbReference type="GO" id="GO:0004674">
    <property type="term" value="F:protein serine/threonine kinase activity"/>
    <property type="evidence" value="ECO:0000250"/>
    <property type="project" value="SGD"/>
</dbReference>
<dbReference type="GO" id="GO:0000082">
    <property type="term" value="P:G1/S transition of mitotic cell cycle"/>
    <property type="evidence" value="ECO:0000318"/>
    <property type="project" value="GO_Central"/>
</dbReference>
<dbReference type="GO" id="GO:0010389">
    <property type="term" value="P:regulation of G2/M transition of mitotic cell cycle"/>
    <property type="evidence" value="ECO:0000318"/>
    <property type="project" value="GO_Central"/>
</dbReference>
<dbReference type="GO" id="GO:0010468">
    <property type="term" value="P:regulation of gene expression"/>
    <property type="evidence" value="ECO:0000318"/>
    <property type="project" value="GO_Central"/>
</dbReference>
<dbReference type="GO" id="GO:0007165">
    <property type="term" value="P:signal transduction"/>
    <property type="evidence" value="ECO:0000318"/>
    <property type="project" value="GO_Central"/>
</dbReference>
<dbReference type="CDD" id="cd07857">
    <property type="entry name" value="STKc_MPK1"/>
    <property type="match status" value="1"/>
</dbReference>
<dbReference type="FunFam" id="1.10.510.10:FF:000040">
    <property type="entry name" value="Mitogen-activated protein kinase"/>
    <property type="match status" value="1"/>
</dbReference>
<dbReference type="FunFam" id="3.30.200.20:FF:000647">
    <property type="entry name" value="Mitogen-activated protein kinase"/>
    <property type="match status" value="1"/>
</dbReference>
<dbReference type="Gene3D" id="3.30.200.20">
    <property type="entry name" value="Phosphorylase Kinase, domain 1"/>
    <property type="match status" value="1"/>
</dbReference>
<dbReference type="Gene3D" id="1.10.510.10">
    <property type="entry name" value="Transferase(Phosphotransferase) domain 1"/>
    <property type="match status" value="1"/>
</dbReference>
<dbReference type="InterPro" id="IPR011009">
    <property type="entry name" value="Kinase-like_dom_sf"/>
</dbReference>
<dbReference type="InterPro" id="IPR050117">
    <property type="entry name" value="MAP_kinase"/>
</dbReference>
<dbReference type="InterPro" id="IPR000719">
    <property type="entry name" value="Prot_kinase_dom"/>
</dbReference>
<dbReference type="InterPro" id="IPR017441">
    <property type="entry name" value="Protein_kinase_ATP_BS"/>
</dbReference>
<dbReference type="InterPro" id="IPR008271">
    <property type="entry name" value="Ser/Thr_kinase_AS"/>
</dbReference>
<dbReference type="PANTHER" id="PTHR24055">
    <property type="entry name" value="MITOGEN-ACTIVATED PROTEIN KINASE"/>
    <property type="match status" value="1"/>
</dbReference>
<dbReference type="Pfam" id="PF00069">
    <property type="entry name" value="Pkinase"/>
    <property type="match status" value="1"/>
</dbReference>
<dbReference type="SMART" id="SM00220">
    <property type="entry name" value="S_TKc"/>
    <property type="match status" value="1"/>
</dbReference>
<dbReference type="SUPFAM" id="SSF56112">
    <property type="entry name" value="Protein kinase-like (PK-like)"/>
    <property type="match status" value="1"/>
</dbReference>
<dbReference type="PROSITE" id="PS00107">
    <property type="entry name" value="PROTEIN_KINASE_ATP"/>
    <property type="match status" value="1"/>
</dbReference>
<dbReference type="PROSITE" id="PS50011">
    <property type="entry name" value="PROTEIN_KINASE_DOM"/>
    <property type="match status" value="1"/>
</dbReference>
<dbReference type="PROSITE" id="PS00108">
    <property type="entry name" value="PROTEIN_KINASE_ST"/>
    <property type="match status" value="1"/>
</dbReference>
<gene>
    <name type="primary">KDX1</name>
    <name type="synonym">MLP1</name>
    <name type="ordered locus">YKL161C</name>
    <name type="ORF">YKL615</name>
</gene>